<organism>
    <name type="scientific">Burkholderia pseudomallei (strain 1106a)</name>
    <dbReference type="NCBI Taxonomy" id="357348"/>
    <lineage>
        <taxon>Bacteria</taxon>
        <taxon>Pseudomonadati</taxon>
        <taxon>Pseudomonadota</taxon>
        <taxon>Betaproteobacteria</taxon>
        <taxon>Burkholderiales</taxon>
        <taxon>Burkholderiaceae</taxon>
        <taxon>Burkholderia</taxon>
        <taxon>pseudomallei group</taxon>
    </lineage>
</organism>
<accession>A3NX27</accession>
<gene>
    <name evidence="1" type="primary">lysS</name>
    <name type="ordered locus">BURPS1106A_2645</name>
</gene>
<dbReference type="EC" id="6.1.1.6" evidence="1"/>
<dbReference type="EMBL" id="CP000572">
    <property type="protein sequence ID" value="ABN90837.1"/>
    <property type="molecule type" value="Genomic_DNA"/>
</dbReference>
<dbReference type="RefSeq" id="WP_004192783.1">
    <property type="nucleotide sequence ID" value="NC_009076.1"/>
</dbReference>
<dbReference type="SMR" id="A3NX27"/>
<dbReference type="GeneID" id="93060838"/>
<dbReference type="KEGG" id="bpl:BURPS1106A_2645"/>
<dbReference type="HOGENOM" id="CLU_008255_6_0_4"/>
<dbReference type="Proteomes" id="UP000006738">
    <property type="component" value="Chromosome I"/>
</dbReference>
<dbReference type="GO" id="GO:0005829">
    <property type="term" value="C:cytosol"/>
    <property type="evidence" value="ECO:0007669"/>
    <property type="project" value="TreeGrafter"/>
</dbReference>
<dbReference type="GO" id="GO:0005524">
    <property type="term" value="F:ATP binding"/>
    <property type="evidence" value="ECO:0007669"/>
    <property type="project" value="UniProtKB-UniRule"/>
</dbReference>
<dbReference type="GO" id="GO:0004824">
    <property type="term" value="F:lysine-tRNA ligase activity"/>
    <property type="evidence" value="ECO:0007669"/>
    <property type="project" value="UniProtKB-UniRule"/>
</dbReference>
<dbReference type="GO" id="GO:0000287">
    <property type="term" value="F:magnesium ion binding"/>
    <property type="evidence" value="ECO:0007669"/>
    <property type="project" value="UniProtKB-UniRule"/>
</dbReference>
<dbReference type="GO" id="GO:0000049">
    <property type="term" value="F:tRNA binding"/>
    <property type="evidence" value="ECO:0007669"/>
    <property type="project" value="TreeGrafter"/>
</dbReference>
<dbReference type="GO" id="GO:0006430">
    <property type="term" value="P:lysyl-tRNA aminoacylation"/>
    <property type="evidence" value="ECO:0007669"/>
    <property type="project" value="UniProtKB-UniRule"/>
</dbReference>
<dbReference type="CDD" id="cd00775">
    <property type="entry name" value="LysRS_core"/>
    <property type="match status" value="1"/>
</dbReference>
<dbReference type="CDD" id="cd04322">
    <property type="entry name" value="LysRS_N"/>
    <property type="match status" value="1"/>
</dbReference>
<dbReference type="FunFam" id="2.40.50.140:FF:000024">
    <property type="entry name" value="Lysine--tRNA ligase"/>
    <property type="match status" value="1"/>
</dbReference>
<dbReference type="FunFam" id="3.30.930.10:FF:000001">
    <property type="entry name" value="Lysine--tRNA ligase"/>
    <property type="match status" value="1"/>
</dbReference>
<dbReference type="Gene3D" id="3.30.930.10">
    <property type="entry name" value="Bira Bifunctional Protein, Domain 2"/>
    <property type="match status" value="1"/>
</dbReference>
<dbReference type="Gene3D" id="2.40.50.140">
    <property type="entry name" value="Nucleic acid-binding proteins"/>
    <property type="match status" value="1"/>
</dbReference>
<dbReference type="HAMAP" id="MF_00252">
    <property type="entry name" value="Lys_tRNA_synth_class2"/>
    <property type="match status" value="1"/>
</dbReference>
<dbReference type="InterPro" id="IPR004364">
    <property type="entry name" value="Aa-tRNA-synt_II"/>
</dbReference>
<dbReference type="InterPro" id="IPR006195">
    <property type="entry name" value="aa-tRNA-synth_II"/>
</dbReference>
<dbReference type="InterPro" id="IPR045864">
    <property type="entry name" value="aa-tRNA-synth_II/BPL/LPL"/>
</dbReference>
<dbReference type="InterPro" id="IPR002313">
    <property type="entry name" value="Lys-tRNA-ligase_II"/>
</dbReference>
<dbReference type="InterPro" id="IPR044136">
    <property type="entry name" value="Lys-tRNA-ligase_II_N"/>
</dbReference>
<dbReference type="InterPro" id="IPR018149">
    <property type="entry name" value="Lys-tRNA-synth_II_C"/>
</dbReference>
<dbReference type="InterPro" id="IPR012340">
    <property type="entry name" value="NA-bd_OB-fold"/>
</dbReference>
<dbReference type="InterPro" id="IPR004365">
    <property type="entry name" value="NA-bd_OB_tRNA"/>
</dbReference>
<dbReference type="NCBIfam" id="TIGR00499">
    <property type="entry name" value="lysS_bact"/>
    <property type="match status" value="1"/>
</dbReference>
<dbReference type="NCBIfam" id="NF001756">
    <property type="entry name" value="PRK00484.1"/>
    <property type="match status" value="1"/>
</dbReference>
<dbReference type="PANTHER" id="PTHR42918:SF15">
    <property type="entry name" value="LYSINE--TRNA LIGASE, CHLOROPLASTIC_MITOCHONDRIAL"/>
    <property type="match status" value="1"/>
</dbReference>
<dbReference type="PANTHER" id="PTHR42918">
    <property type="entry name" value="LYSYL-TRNA SYNTHETASE"/>
    <property type="match status" value="1"/>
</dbReference>
<dbReference type="Pfam" id="PF00152">
    <property type="entry name" value="tRNA-synt_2"/>
    <property type="match status" value="1"/>
</dbReference>
<dbReference type="Pfam" id="PF01336">
    <property type="entry name" value="tRNA_anti-codon"/>
    <property type="match status" value="1"/>
</dbReference>
<dbReference type="PRINTS" id="PR00982">
    <property type="entry name" value="TRNASYNTHLYS"/>
</dbReference>
<dbReference type="SUPFAM" id="SSF55681">
    <property type="entry name" value="Class II aaRS and biotin synthetases"/>
    <property type="match status" value="1"/>
</dbReference>
<dbReference type="SUPFAM" id="SSF50249">
    <property type="entry name" value="Nucleic acid-binding proteins"/>
    <property type="match status" value="1"/>
</dbReference>
<dbReference type="PROSITE" id="PS50862">
    <property type="entry name" value="AA_TRNA_LIGASE_II"/>
    <property type="match status" value="1"/>
</dbReference>
<feature type="chain" id="PRO_1000012855" description="Lysine--tRNA ligase">
    <location>
        <begin position="1"/>
        <end position="508"/>
    </location>
</feature>
<feature type="binding site" evidence="1">
    <location>
        <position position="418"/>
    </location>
    <ligand>
        <name>Mg(2+)</name>
        <dbReference type="ChEBI" id="CHEBI:18420"/>
        <label>1</label>
    </ligand>
</feature>
<feature type="binding site" evidence="1">
    <location>
        <position position="425"/>
    </location>
    <ligand>
        <name>Mg(2+)</name>
        <dbReference type="ChEBI" id="CHEBI:18420"/>
        <label>1</label>
    </ligand>
</feature>
<feature type="binding site" evidence="1">
    <location>
        <position position="425"/>
    </location>
    <ligand>
        <name>Mg(2+)</name>
        <dbReference type="ChEBI" id="CHEBI:18420"/>
        <label>2</label>
    </ligand>
</feature>
<reference key="1">
    <citation type="journal article" date="2010" name="Genome Biol. Evol.">
        <title>Continuing evolution of Burkholderia mallei through genome reduction and large-scale rearrangements.</title>
        <authorList>
            <person name="Losada L."/>
            <person name="Ronning C.M."/>
            <person name="DeShazer D."/>
            <person name="Woods D."/>
            <person name="Fedorova N."/>
            <person name="Kim H.S."/>
            <person name="Shabalina S.A."/>
            <person name="Pearson T.R."/>
            <person name="Brinkac L."/>
            <person name="Tan P."/>
            <person name="Nandi T."/>
            <person name="Crabtree J."/>
            <person name="Badger J."/>
            <person name="Beckstrom-Sternberg S."/>
            <person name="Saqib M."/>
            <person name="Schutzer S.E."/>
            <person name="Keim P."/>
            <person name="Nierman W.C."/>
        </authorList>
    </citation>
    <scope>NUCLEOTIDE SEQUENCE [LARGE SCALE GENOMIC DNA]</scope>
    <source>
        <strain>1106a</strain>
    </source>
</reference>
<proteinExistence type="inferred from homology"/>
<name>SYK_BURP0</name>
<comment type="catalytic activity">
    <reaction evidence="1">
        <text>tRNA(Lys) + L-lysine + ATP = L-lysyl-tRNA(Lys) + AMP + diphosphate</text>
        <dbReference type="Rhea" id="RHEA:20792"/>
        <dbReference type="Rhea" id="RHEA-COMP:9696"/>
        <dbReference type="Rhea" id="RHEA-COMP:9697"/>
        <dbReference type="ChEBI" id="CHEBI:30616"/>
        <dbReference type="ChEBI" id="CHEBI:32551"/>
        <dbReference type="ChEBI" id="CHEBI:33019"/>
        <dbReference type="ChEBI" id="CHEBI:78442"/>
        <dbReference type="ChEBI" id="CHEBI:78529"/>
        <dbReference type="ChEBI" id="CHEBI:456215"/>
        <dbReference type="EC" id="6.1.1.6"/>
    </reaction>
</comment>
<comment type="cofactor">
    <cofactor evidence="1">
        <name>Mg(2+)</name>
        <dbReference type="ChEBI" id="CHEBI:18420"/>
    </cofactor>
    <text evidence="1">Binds 3 Mg(2+) ions per subunit.</text>
</comment>
<comment type="subunit">
    <text evidence="1">Homodimer.</text>
</comment>
<comment type="subcellular location">
    <subcellularLocation>
        <location evidence="1">Cytoplasm</location>
    </subcellularLocation>
</comment>
<comment type="similarity">
    <text evidence="1">Belongs to the class-II aminoacyl-tRNA synthetase family.</text>
</comment>
<keyword id="KW-0030">Aminoacyl-tRNA synthetase</keyword>
<keyword id="KW-0067">ATP-binding</keyword>
<keyword id="KW-0963">Cytoplasm</keyword>
<keyword id="KW-0436">Ligase</keyword>
<keyword id="KW-0460">Magnesium</keyword>
<keyword id="KW-0479">Metal-binding</keyword>
<keyword id="KW-0547">Nucleotide-binding</keyword>
<keyword id="KW-0648">Protein biosynthesis</keyword>
<evidence type="ECO:0000255" key="1">
    <source>
        <dbReference type="HAMAP-Rule" id="MF_00252"/>
    </source>
</evidence>
<sequence length="508" mass="57202">MTEPTQPQAAVAADENQIVAERRDKLRALRDQGIAYPNDFQPTHHAAGLQTEYADADKEALDAKALDVAVAGRMMLKRVMGKASFATVQDGSGQIQFFVTPADVGAETYDAFKKWDLGDIVAARGVLFRTNKGELSVKCTELRLLAKALRPLPDKFHGLADQETRYRQRYVDLIVTPETRATFRARTKAIASIRKFMSDADFMEVETPMLHPIPGGAAAKPFVTHHNALDMQMFLRIAPELYLKRLIVGGFERVFEINRNFRNEGVSPRHNPEFTMMEFYAAYTDYRWLMDFTERLIRQAAVDALGTATIRYQGRELDLAKPFHRLTITQAIQKYAPNYTDGQLSDDAFLRGELKRLGVDVTQPAFLNAGIGALQLALFEETAEAQLWEPTFIIDYPIEVSPLARESDTVAGITERFELFVTGREIANGFSELNDPEDQAARFRKQVEQKDAGDEEAMFFDADYIRALEYGMPPTGGCGIGIDRLVMLLTDSPTIRDVLLFPHLRRED</sequence>
<protein>
    <recommendedName>
        <fullName evidence="1">Lysine--tRNA ligase</fullName>
        <ecNumber evidence="1">6.1.1.6</ecNumber>
    </recommendedName>
    <alternativeName>
        <fullName evidence="1">Lysyl-tRNA synthetase</fullName>
        <shortName evidence="1">LysRS</shortName>
    </alternativeName>
</protein>